<evidence type="ECO:0000255" key="1">
    <source>
        <dbReference type="HAMAP-Rule" id="MF_01031"/>
    </source>
</evidence>
<dbReference type="EC" id="4.2.1.33" evidence="1"/>
<dbReference type="EMBL" id="CP000436">
    <property type="protein sequence ID" value="ABI24667.1"/>
    <property type="molecule type" value="Genomic_DNA"/>
</dbReference>
<dbReference type="SMR" id="Q0I2G4"/>
<dbReference type="KEGG" id="hso:HS_0389"/>
<dbReference type="eggNOG" id="COG0066">
    <property type="taxonomic scope" value="Bacteria"/>
</dbReference>
<dbReference type="HOGENOM" id="CLU_081378_0_3_6"/>
<dbReference type="UniPathway" id="UPA00048">
    <property type="reaction ID" value="UER00071"/>
</dbReference>
<dbReference type="GO" id="GO:0009316">
    <property type="term" value="C:3-isopropylmalate dehydratase complex"/>
    <property type="evidence" value="ECO:0007669"/>
    <property type="project" value="InterPro"/>
</dbReference>
<dbReference type="GO" id="GO:0003861">
    <property type="term" value="F:3-isopropylmalate dehydratase activity"/>
    <property type="evidence" value="ECO:0007669"/>
    <property type="project" value="UniProtKB-UniRule"/>
</dbReference>
<dbReference type="GO" id="GO:0009098">
    <property type="term" value="P:L-leucine biosynthetic process"/>
    <property type="evidence" value="ECO:0007669"/>
    <property type="project" value="UniProtKB-UniRule"/>
</dbReference>
<dbReference type="CDD" id="cd01577">
    <property type="entry name" value="IPMI_Swivel"/>
    <property type="match status" value="1"/>
</dbReference>
<dbReference type="FunFam" id="3.20.19.10:FF:000003">
    <property type="entry name" value="3-isopropylmalate dehydratase small subunit"/>
    <property type="match status" value="1"/>
</dbReference>
<dbReference type="Gene3D" id="3.20.19.10">
    <property type="entry name" value="Aconitase, domain 4"/>
    <property type="match status" value="1"/>
</dbReference>
<dbReference type="HAMAP" id="MF_01031">
    <property type="entry name" value="LeuD_type1"/>
    <property type="match status" value="1"/>
</dbReference>
<dbReference type="InterPro" id="IPR004431">
    <property type="entry name" value="3-IsopropMal_deHydase_ssu"/>
</dbReference>
<dbReference type="InterPro" id="IPR015928">
    <property type="entry name" value="Aconitase/3IPM_dehydase_swvl"/>
</dbReference>
<dbReference type="InterPro" id="IPR000573">
    <property type="entry name" value="AconitaseA/IPMdHydase_ssu_swvl"/>
</dbReference>
<dbReference type="InterPro" id="IPR033940">
    <property type="entry name" value="IPMI_Swivel"/>
</dbReference>
<dbReference type="InterPro" id="IPR050075">
    <property type="entry name" value="LeuD"/>
</dbReference>
<dbReference type="NCBIfam" id="TIGR00171">
    <property type="entry name" value="leuD"/>
    <property type="match status" value="1"/>
</dbReference>
<dbReference type="NCBIfam" id="NF002458">
    <property type="entry name" value="PRK01641.1"/>
    <property type="match status" value="1"/>
</dbReference>
<dbReference type="PANTHER" id="PTHR43345:SF5">
    <property type="entry name" value="3-ISOPROPYLMALATE DEHYDRATASE SMALL SUBUNIT"/>
    <property type="match status" value="1"/>
</dbReference>
<dbReference type="PANTHER" id="PTHR43345">
    <property type="entry name" value="3-ISOPROPYLMALATE DEHYDRATASE SMALL SUBUNIT 2-RELATED-RELATED"/>
    <property type="match status" value="1"/>
</dbReference>
<dbReference type="Pfam" id="PF00694">
    <property type="entry name" value="Aconitase_C"/>
    <property type="match status" value="1"/>
</dbReference>
<dbReference type="SUPFAM" id="SSF52016">
    <property type="entry name" value="LeuD/IlvD-like"/>
    <property type="match status" value="1"/>
</dbReference>
<name>LEUD_HISS1</name>
<keyword id="KW-0028">Amino-acid biosynthesis</keyword>
<keyword id="KW-0100">Branched-chain amino acid biosynthesis</keyword>
<keyword id="KW-0432">Leucine biosynthesis</keyword>
<keyword id="KW-0456">Lyase</keyword>
<accession>Q0I2G4</accession>
<gene>
    <name evidence="1" type="primary">leuD</name>
    <name type="ordered locus">HS_0389</name>
</gene>
<comment type="function">
    <text evidence="1">Catalyzes the isomerization between 2-isopropylmalate and 3-isopropylmalate, via the formation of 2-isopropylmaleate.</text>
</comment>
<comment type="catalytic activity">
    <reaction evidence="1">
        <text>(2R,3S)-3-isopropylmalate = (2S)-2-isopropylmalate</text>
        <dbReference type="Rhea" id="RHEA:32287"/>
        <dbReference type="ChEBI" id="CHEBI:1178"/>
        <dbReference type="ChEBI" id="CHEBI:35121"/>
        <dbReference type="EC" id="4.2.1.33"/>
    </reaction>
</comment>
<comment type="pathway">
    <text evidence="1">Amino-acid biosynthesis; L-leucine biosynthesis; L-leucine from 3-methyl-2-oxobutanoate: step 2/4.</text>
</comment>
<comment type="subunit">
    <text evidence="1">Heterodimer of LeuC and LeuD.</text>
</comment>
<comment type="similarity">
    <text evidence="1">Belongs to the LeuD family. LeuD type 1 subfamily.</text>
</comment>
<feature type="chain" id="PRO_1000063773" description="3-isopropylmalate dehydratase small subunit">
    <location>
        <begin position="1"/>
        <end position="200"/>
    </location>
</feature>
<proteinExistence type="inferred from homology"/>
<reference key="1">
    <citation type="journal article" date="2007" name="J. Bacteriol.">
        <title>Complete genome sequence of Haemophilus somnus (Histophilus somni) strain 129Pt and comparison to Haemophilus ducreyi 35000HP and Haemophilus influenzae Rd.</title>
        <authorList>
            <person name="Challacombe J.F."/>
            <person name="Duncan A.J."/>
            <person name="Brettin T.S."/>
            <person name="Bruce D."/>
            <person name="Chertkov O."/>
            <person name="Detter J.C."/>
            <person name="Han C.S."/>
            <person name="Misra M."/>
            <person name="Richardson P."/>
            <person name="Tapia R."/>
            <person name="Thayer N."/>
            <person name="Xie G."/>
            <person name="Inzana T.J."/>
        </authorList>
    </citation>
    <scope>NUCLEOTIDE SEQUENCE [LARGE SCALE GENOMIC DNA]</scope>
    <source>
        <strain>129Pt</strain>
    </source>
</reference>
<organism>
    <name type="scientific">Histophilus somni (strain 129Pt)</name>
    <name type="common">Haemophilus somnus</name>
    <dbReference type="NCBI Taxonomy" id="205914"/>
    <lineage>
        <taxon>Bacteria</taxon>
        <taxon>Pseudomonadati</taxon>
        <taxon>Pseudomonadota</taxon>
        <taxon>Gammaproteobacteria</taxon>
        <taxon>Pasteurellales</taxon>
        <taxon>Pasteurellaceae</taxon>
        <taxon>Histophilus</taxon>
    </lineage>
</organism>
<protein>
    <recommendedName>
        <fullName evidence="1">3-isopropylmalate dehydratase small subunit</fullName>
        <ecNumber evidence="1">4.2.1.33</ecNumber>
    </recommendedName>
    <alternativeName>
        <fullName evidence="1">Alpha-IPM isomerase</fullName>
        <shortName evidence="1">IPMI</shortName>
    </alternativeName>
    <alternativeName>
        <fullName evidence="1">Isopropylmalate isomerase</fullName>
    </alternativeName>
</protein>
<sequence length="200" mass="22949">MAGIKQHSGLVVPLDAANVDTDAIIPKQFLQAITRVGFGKHLFHEWRYLDEEGTVPNPKFVLNFPEYQGATILLARKNLGCGSSREHAPWALADYGFKVMIAPSFADIFYNNSLNNHMLPIRLNEEEVEEIFQWVWKNKGCEIHVNLENLTVTTGNKIYHFELDEFRRHCLLNGLDNIGLTLQHEDKIAEYEKNIPAFLR</sequence>